<keyword id="KW-0328">Glycosyltransferase</keyword>
<keyword id="KW-0694">RNA-binding</keyword>
<keyword id="KW-0804">Transcription</keyword>
<keyword id="KW-0805">Transcription regulation</keyword>
<keyword id="KW-0806">Transcription termination</keyword>
<keyword id="KW-0808">Transferase</keyword>
<dbReference type="EC" id="2.4.2.9" evidence="1"/>
<dbReference type="EMBL" id="CP001129">
    <property type="protein sequence ID" value="ACG62479.1"/>
    <property type="molecule type" value="Genomic_DNA"/>
</dbReference>
<dbReference type="RefSeq" id="WP_012515744.1">
    <property type="nucleotide sequence ID" value="NC_011134.1"/>
</dbReference>
<dbReference type="SMR" id="B4U3B2"/>
<dbReference type="KEGG" id="sez:Sez_1127"/>
<dbReference type="HOGENOM" id="CLU_094234_2_1_9"/>
<dbReference type="Proteomes" id="UP000001873">
    <property type="component" value="Chromosome"/>
</dbReference>
<dbReference type="GO" id="GO:0003723">
    <property type="term" value="F:RNA binding"/>
    <property type="evidence" value="ECO:0007669"/>
    <property type="project" value="UniProtKB-UniRule"/>
</dbReference>
<dbReference type="GO" id="GO:0004845">
    <property type="term" value="F:uracil phosphoribosyltransferase activity"/>
    <property type="evidence" value="ECO:0007669"/>
    <property type="project" value="UniProtKB-UniRule"/>
</dbReference>
<dbReference type="GO" id="GO:0006353">
    <property type="term" value="P:DNA-templated transcription termination"/>
    <property type="evidence" value="ECO:0007669"/>
    <property type="project" value="UniProtKB-UniRule"/>
</dbReference>
<dbReference type="CDD" id="cd06223">
    <property type="entry name" value="PRTases_typeI"/>
    <property type="match status" value="1"/>
</dbReference>
<dbReference type="FunFam" id="3.40.50.2020:FF:000020">
    <property type="entry name" value="Bifunctional protein PyrR"/>
    <property type="match status" value="1"/>
</dbReference>
<dbReference type="Gene3D" id="3.40.50.2020">
    <property type="match status" value="1"/>
</dbReference>
<dbReference type="HAMAP" id="MF_01219">
    <property type="entry name" value="PyrR"/>
    <property type="match status" value="1"/>
</dbReference>
<dbReference type="InterPro" id="IPR000836">
    <property type="entry name" value="PRibTrfase_dom"/>
</dbReference>
<dbReference type="InterPro" id="IPR029057">
    <property type="entry name" value="PRTase-like"/>
</dbReference>
<dbReference type="InterPro" id="IPR023050">
    <property type="entry name" value="PyrR"/>
</dbReference>
<dbReference type="InterPro" id="IPR050137">
    <property type="entry name" value="PyrR_bifunctional"/>
</dbReference>
<dbReference type="NCBIfam" id="NF003548">
    <property type="entry name" value="PRK05205.1-4"/>
    <property type="match status" value="1"/>
</dbReference>
<dbReference type="NCBIfam" id="NF003549">
    <property type="entry name" value="PRK05205.1-5"/>
    <property type="match status" value="1"/>
</dbReference>
<dbReference type="PANTHER" id="PTHR11608">
    <property type="entry name" value="BIFUNCTIONAL PROTEIN PYRR"/>
    <property type="match status" value="1"/>
</dbReference>
<dbReference type="PANTHER" id="PTHR11608:SF0">
    <property type="entry name" value="BIFUNCTIONAL PROTEIN PYRR"/>
    <property type="match status" value="1"/>
</dbReference>
<dbReference type="Pfam" id="PF00156">
    <property type="entry name" value="Pribosyltran"/>
    <property type="match status" value="1"/>
</dbReference>
<dbReference type="SUPFAM" id="SSF53271">
    <property type="entry name" value="PRTase-like"/>
    <property type="match status" value="1"/>
</dbReference>
<gene>
    <name evidence="1" type="primary">pyrR</name>
    <name type="ordered locus">Sez_1127</name>
</gene>
<sequence length="173" mass="19562">MKSKVIVDELTMKRAITRITYEIIERNKQLDNVVLVGIKTRGVYLARRIQERLEQLESLHLAVGELDTKPFRDDMRVEEDTTSMPVDITGKDIILVDDVLYTGRTIRAAIDNLVSLGRPGRVSLAVLVDRGHRELPIRADYVGKNIPTSKTEEIVVEVVEVDGQDRISIVDPE</sequence>
<accession>B4U3B2</accession>
<proteinExistence type="inferred from homology"/>
<evidence type="ECO:0000255" key="1">
    <source>
        <dbReference type="HAMAP-Rule" id="MF_01219"/>
    </source>
</evidence>
<feature type="chain" id="PRO_1000139208" description="Bifunctional protein PyrR">
    <location>
        <begin position="1"/>
        <end position="173"/>
    </location>
</feature>
<feature type="short sequence motif" description="PRPP-binding" evidence="1">
    <location>
        <begin position="93"/>
        <end position="105"/>
    </location>
</feature>
<name>PYRR_STREM</name>
<organism>
    <name type="scientific">Streptococcus equi subsp. zooepidemicus (strain MGCS10565)</name>
    <dbReference type="NCBI Taxonomy" id="552526"/>
    <lineage>
        <taxon>Bacteria</taxon>
        <taxon>Bacillati</taxon>
        <taxon>Bacillota</taxon>
        <taxon>Bacilli</taxon>
        <taxon>Lactobacillales</taxon>
        <taxon>Streptococcaceae</taxon>
        <taxon>Streptococcus</taxon>
    </lineage>
</organism>
<reference key="1">
    <citation type="journal article" date="2008" name="PLoS ONE">
        <title>Genome sequence of a lancefield group C Streptococcus zooepidemicus strain causing epidemic nephritis: new information about an old disease.</title>
        <authorList>
            <person name="Beres S.B."/>
            <person name="Sesso R."/>
            <person name="Pinto S.W.L."/>
            <person name="Hoe N.P."/>
            <person name="Porcella S.F."/>
            <person name="Deleo F.R."/>
            <person name="Musser J.M."/>
        </authorList>
    </citation>
    <scope>NUCLEOTIDE SEQUENCE [LARGE SCALE GENOMIC DNA]</scope>
    <source>
        <strain>MGCS10565</strain>
    </source>
</reference>
<protein>
    <recommendedName>
        <fullName evidence="1">Bifunctional protein PyrR</fullName>
    </recommendedName>
    <domain>
        <recommendedName>
            <fullName evidence="1">Pyrimidine operon regulatory protein</fullName>
        </recommendedName>
    </domain>
    <domain>
        <recommendedName>
            <fullName evidence="1">Uracil phosphoribosyltransferase</fullName>
            <shortName evidence="1">UPRTase</shortName>
            <ecNumber evidence="1">2.4.2.9</ecNumber>
        </recommendedName>
    </domain>
</protein>
<comment type="function">
    <text evidence="1">Regulates transcriptional attenuation of the pyrimidine nucleotide (pyr) operon by binding in a uridine-dependent manner to specific sites on pyr mRNA. This disrupts an antiterminator hairpin in the RNA and favors formation of a downstream transcription terminator, leading to a reduced expression of downstream genes.</text>
</comment>
<comment type="function">
    <text evidence="1">Also displays a weak uracil phosphoribosyltransferase activity which is not physiologically significant.</text>
</comment>
<comment type="catalytic activity">
    <reaction evidence="1">
        <text>UMP + diphosphate = 5-phospho-alpha-D-ribose 1-diphosphate + uracil</text>
        <dbReference type="Rhea" id="RHEA:13017"/>
        <dbReference type="ChEBI" id="CHEBI:17568"/>
        <dbReference type="ChEBI" id="CHEBI:33019"/>
        <dbReference type="ChEBI" id="CHEBI:57865"/>
        <dbReference type="ChEBI" id="CHEBI:58017"/>
        <dbReference type="EC" id="2.4.2.9"/>
    </reaction>
</comment>
<comment type="subunit">
    <text evidence="1">Homodimer and homohexamer; in equilibrium.</text>
</comment>
<comment type="similarity">
    <text evidence="1">Belongs to the purine/pyrimidine phosphoribosyltransferase family. PyrR subfamily.</text>
</comment>